<gene>
    <name type="primary">dnaK</name>
    <name type="ordered locus">MM_2505</name>
</gene>
<organism>
    <name type="scientific">Methanosarcina mazei (strain ATCC BAA-159 / DSM 3647 / Goe1 / Go1 / JCM 11833 / OCM 88)</name>
    <name type="common">Methanosarcina frisia</name>
    <dbReference type="NCBI Taxonomy" id="192952"/>
    <lineage>
        <taxon>Archaea</taxon>
        <taxon>Methanobacteriati</taxon>
        <taxon>Methanobacteriota</taxon>
        <taxon>Stenosarchaea group</taxon>
        <taxon>Methanomicrobia</taxon>
        <taxon>Methanosarcinales</taxon>
        <taxon>Methanosarcinaceae</taxon>
        <taxon>Methanosarcina</taxon>
    </lineage>
</organism>
<name>DNAK_METMA</name>
<accession>P0CW13</accession>
<accession>P27094</accession>
<comment type="function">
    <text evidence="1">Acts as a chaperone.</text>
</comment>
<comment type="similarity">
    <text evidence="3">Belongs to the heat shock protein 70 family.</text>
</comment>
<reference key="1">
    <citation type="journal article" date="2002" name="J. Mol. Microbiol. Biotechnol.">
        <title>The genome of Methanosarcina mazei: evidence for lateral gene transfer between Bacteria and Archaea.</title>
        <authorList>
            <person name="Deppenmeier U."/>
            <person name="Johann A."/>
            <person name="Hartsch T."/>
            <person name="Merkl R."/>
            <person name="Schmitz R.A."/>
            <person name="Martinez-Arias R."/>
            <person name="Henne A."/>
            <person name="Wiezer A."/>
            <person name="Baeumer S."/>
            <person name="Jacobi C."/>
            <person name="Brueggemann H."/>
            <person name="Lienard T."/>
            <person name="Christmann A."/>
            <person name="Boemecke M."/>
            <person name="Steckel S."/>
            <person name="Bhattacharyya A."/>
            <person name="Lykidis A."/>
            <person name="Overbeek R."/>
            <person name="Klenk H.-P."/>
            <person name="Gunsalus R.P."/>
            <person name="Fritz H.-J."/>
            <person name="Gottschalk G."/>
        </authorList>
    </citation>
    <scope>NUCLEOTIDE SEQUENCE [LARGE SCALE GENOMIC DNA]</scope>
    <source>
        <strain>ATCC BAA-159 / DSM 3647 / Goe1 / Go1 / JCM 11833 / OCM 88</strain>
    </source>
</reference>
<evidence type="ECO:0000250" key="1"/>
<evidence type="ECO:0000256" key="2">
    <source>
        <dbReference type="SAM" id="MobiDB-lite"/>
    </source>
</evidence>
<evidence type="ECO:0000305" key="3"/>
<sequence length="619" mass="66288">MAKILGIDLGTTNSCVAVMEGGEAVVIPNAEGSRTTPSVVGFSKKGEKLVGQVAKRQAISNPDNTVYSIKRHMGEANYKVTLNGKDYTPQEISAMILQKLKADAEAYLGETIKQAVITVPAYFNDSQRQATKDAGAIAGLEVLRIINEPTAASLAYGLDKGDIDQKILVYDLGGGTFDVSILELGGGVFEVKSTSGDTHLGGDDFDQRVIDYLLAEFKKSEGIDLSKDKAVLQRLKDAAEKAKIELSGVANTNINLPFLTVGTDGEPKHMDIDLTRAQFQKMTEDLLEKTLVSMRRALSDAKLTPNDLDKVILVGGATRMPAVVELVENFTGKKPYKNINPDEAVAIGAAIQAGVLGGEVKDVLLLDVTPLTLGIETLGGIATPLIQRNTTIPTKKSQIFSTAADNQPSVEIHVLQGERGIASENKTLGRFILDGIPPAPRGIPQIEVTFDIDANGILHVSAKDLGTGKQQSISIQKPGGLSDDEIERMVKDAEMHAEEDRKRKEEVEIRNNAEALINAAEKTIKEAGDLATEDQKSKVNAAIEDLKKALEGKDAEDIKAKTEALQESVYPISTAMYQKAQQAQQAAGGEGGAAGTDARGPDETVVDADYEVVDDEKRK</sequence>
<proteinExistence type="inferred from homology"/>
<dbReference type="EMBL" id="AE008384">
    <property type="protein sequence ID" value="AAM32201.1"/>
    <property type="molecule type" value="Genomic_DNA"/>
</dbReference>
<dbReference type="RefSeq" id="WP_011034423.1">
    <property type="nucleotide sequence ID" value="NC_003901.1"/>
</dbReference>
<dbReference type="SMR" id="P0CW13"/>
<dbReference type="GeneID" id="82161582"/>
<dbReference type="KEGG" id="mma:MM_2505"/>
<dbReference type="PATRIC" id="fig|192952.21.peg.2868"/>
<dbReference type="eggNOG" id="arCOG03060">
    <property type="taxonomic scope" value="Archaea"/>
</dbReference>
<dbReference type="HOGENOM" id="CLU_005965_2_4_2"/>
<dbReference type="Proteomes" id="UP000000595">
    <property type="component" value="Chromosome"/>
</dbReference>
<dbReference type="GO" id="GO:0005524">
    <property type="term" value="F:ATP binding"/>
    <property type="evidence" value="ECO:0007669"/>
    <property type="project" value="UniProtKB-UniRule"/>
</dbReference>
<dbReference type="GO" id="GO:0140662">
    <property type="term" value="F:ATP-dependent protein folding chaperone"/>
    <property type="evidence" value="ECO:0007669"/>
    <property type="project" value="InterPro"/>
</dbReference>
<dbReference type="GO" id="GO:0051082">
    <property type="term" value="F:unfolded protein binding"/>
    <property type="evidence" value="ECO:0007669"/>
    <property type="project" value="InterPro"/>
</dbReference>
<dbReference type="CDD" id="cd10234">
    <property type="entry name" value="ASKHA_NBD_HSP70_DnaK-like"/>
    <property type="match status" value="1"/>
</dbReference>
<dbReference type="FunFam" id="1.20.1270.10:FF:000059">
    <property type="entry name" value="Chaperone protein DnaK"/>
    <property type="match status" value="1"/>
</dbReference>
<dbReference type="FunFam" id="2.60.34.10:FF:000014">
    <property type="entry name" value="Chaperone protein DnaK HSP70"/>
    <property type="match status" value="1"/>
</dbReference>
<dbReference type="FunFam" id="3.30.420.40:FF:000071">
    <property type="entry name" value="Molecular chaperone DnaK"/>
    <property type="match status" value="1"/>
</dbReference>
<dbReference type="FunFam" id="3.90.640.10:FF:000003">
    <property type="entry name" value="Molecular chaperone DnaK"/>
    <property type="match status" value="1"/>
</dbReference>
<dbReference type="Gene3D" id="1.20.1270.10">
    <property type="match status" value="1"/>
</dbReference>
<dbReference type="Gene3D" id="3.30.420.40">
    <property type="match status" value="2"/>
</dbReference>
<dbReference type="Gene3D" id="3.90.640.10">
    <property type="entry name" value="Actin, Chain A, domain 4"/>
    <property type="match status" value="1"/>
</dbReference>
<dbReference type="Gene3D" id="2.60.34.10">
    <property type="entry name" value="Substrate Binding Domain Of DNAk, Chain A, domain 1"/>
    <property type="match status" value="1"/>
</dbReference>
<dbReference type="HAMAP" id="MF_00332">
    <property type="entry name" value="DnaK"/>
    <property type="match status" value="1"/>
</dbReference>
<dbReference type="InterPro" id="IPR043129">
    <property type="entry name" value="ATPase_NBD"/>
</dbReference>
<dbReference type="InterPro" id="IPR012725">
    <property type="entry name" value="Chaperone_DnaK"/>
</dbReference>
<dbReference type="InterPro" id="IPR018181">
    <property type="entry name" value="Heat_shock_70_CS"/>
</dbReference>
<dbReference type="InterPro" id="IPR029048">
    <property type="entry name" value="HSP70_C_sf"/>
</dbReference>
<dbReference type="InterPro" id="IPR029047">
    <property type="entry name" value="HSP70_peptide-bd_sf"/>
</dbReference>
<dbReference type="InterPro" id="IPR013126">
    <property type="entry name" value="Hsp_70_fam"/>
</dbReference>
<dbReference type="NCBIfam" id="NF001413">
    <property type="entry name" value="PRK00290.1"/>
    <property type="match status" value="1"/>
</dbReference>
<dbReference type="NCBIfam" id="TIGR02350">
    <property type="entry name" value="prok_dnaK"/>
    <property type="match status" value="1"/>
</dbReference>
<dbReference type="PANTHER" id="PTHR19375">
    <property type="entry name" value="HEAT SHOCK PROTEIN 70KDA"/>
    <property type="match status" value="1"/>
</dbReference>
<dbReference type="Pfam" id="PF00012">
    <property type="entry name" value="HSP70"/>
    <property type="match status" value="1"/>
</dbReference>
<dbReference type="PRINTS" id="PR00301">
    <property type="entry name" value="HEATSHOCK70"/>
</dbReference>
<dbReference type="SUPFAM" id="SSF53067">
    <property type="entry name" value="Actin-like ATPase domain"/>
    <property type="match status" value="2"/>
</dbReference>
<dbReference type="SUPFAM" id="SSF100934">
    <property type="entry name" value="Heat shock protein 70kD (HSP70), C-terminal subdomain"/>
    <property type="match status" value="1"/>
</dbReference>
<dbReference type="SUPFAM" id="SSF100920">
    <property type="entry name" value="Heat shock protein 70kD (HSP70), peptide-binding domain"/>
    <property type="match status" value="1"/>
</dbReference>
<dbReference type="PROSITE" id="PS00297">
    <property type="entry name" value="HSP70_1"/>
    <property type="match status" value="1"/>
</dbReference>
<dbReference type="PROSITE" id="PS00329">
    <property type="entry name" value="HSP70_2"/>
    <property type="match status" value="1"/>
</dbReference>
<dbReference type="PROSITE" id="PS01036">
    <property type="entry name" value="HSP70_3"/>
    <property type="match status" value="1"/>
</dbReference>
<feature type="chain" id="PRO_0000408039" description="Chaperone protein DnaK">
    <location>
        <begin position="1"/>
        <end position="619"/>
    </location>
</feature>
<feature type="region of interest" description="Disordered" evidence="2">
    <location>
        <begin position="580"/>
        <end position="619"/>
    </location>
</feature>
<feature type="compositionally biased region" description="Acidic residues" evidence="2">
    <location>
        <begin position="604"/>
        <end position="619"/>
    </location>
</feature>
<keyword id="KW-0067">ATP-binding</keyword>
<keyword id="KW-0143">Chaperone</keyword>
<keyword id="KW-0547">Nucleotide-binding</keyword>
<protein>
    <recommendedName>
        <fullName>Chaperone protein DnaK</fullName>
    </recommendedName>
    <alternativeName>
        <fullName>HSP70</fullName>
    </alternativeName>
    <alternativeName>
        <fullName>Heat shock 70 kDa protein</fullName>
    </alternativeName>
    <alternativeName>
        <fullName>Heat shock protein 70</fullName>
    </alternativeName>
</protein>